<dbReference type="EMBL" id="AB001684">
    <property type="protein sequence ID" value="BAA20753.1"/>
    <property type="molecule type" value="Genomic_DNA"/>
</dbReference>
<dbReference type="PIR" id="T07363">
    <property type="entry name" value="T07363"/>
</dbReference>
<dbReference type="RefSeq" id="NP_045761.1">
    <property type="nucleotide sequence ID" value="NC_001865.1"/>
</dbReference>
<dbReference type="GeneID" id="809104"/>
<dbReference type="GO" id="GO:0009706">
    <property type="term" value="C:chloroplast inner membrane"/>
    <property type="evidence" value="ECO:0007669"/>
    <property type="project" value="UniProtKB-SubCell"/>
</dbReference>
<dbReference type="GO" id="GO:0015297">
    <property type="term" value="F:antiporter activity"/>
    <property type="evidence" value="ECO:0007669"/>
    <property type="project" value="UniProtKB-KW"/>
</dbReference>
<dbReference type="GO" id="GO:0015078">
    <property type="term" value="F:proton transmembrane transporter activity"/>
    <property type="evidence" value="ECO:0007669"/>
    <property type="project" value="UniProtKB-UniRule"/>
</dbReference>
<dbReference type="GO" id="GO:0006813">
    <property type="term" value="P:potassium ion transport"/>
    <property type="evidence" value="ECO:0007669"/>
    <property type="project" value="UniProtKB-UniRule"/>
</dbReference>
<dbReference type="HAMAP" id="MF_01308">
    <property type="entry name" value="CemA_PxcA"/>
    <property type="match status" value="1"/>
</dbReference>
<dbReference type="InterPro" id="IPR004282">
    <property type="entry name" value="CemA"/>
</dbReference>
<dbReference type="PANTHER" id="PTHR33650:SF2">
    <property type="entry name" value="CHLOROPLAST ENVELOPE MEMBRANE PROTEIN"/>
    <property type="match status" value="1"/>
</dbReference>
<dbReference type="PANTHER" id="PTHR33650">
    <property type="entry name" value="CHLOROPLAST ENVELOPE MEMBRANE PROTEIN-RELATED"/>
    <property type="match status" value="1"/>
</dbReference>
<dbReference type="Pfam" id="PF03040">
    <property type="entry name" value="CemA"/>
    <property type="match status" value="1"/>
</dbReference>
<name>CEMA_CHLVU</name>
<proteinExistence type="inferred from homology"/>
<comment type="function">
    <text evidence="1">Contributes to K(+)/H(+) antiport activity by supporting proton efflux to control proton extrusion and homeostasis in chloroplasts in a light-dependent manner to modulate photosynthesis. Prevents excessive induction of non-photochemical quenching (NPQ) under continuous-light conditions. Indirectly promotes efficient inorganic carbon uptake into chloroplasts.</text>
</comment>
<comment type="catalytic activity">
    <reaction evidence="1">
        <text>K(+)(in) + H(+)(out) = K(+)(out) + H(+)(in)</text>
        <dbReference type="Rhea" id="RHEA:29467"/>
        <dbReference type="ChEBI" id="CHEBI:15378"/>
        <dbReference type="ChEBI" id="CHEBI:29103"/>
    </reaction>
</comment>
<comment type="subcellular location">
    <subcellularLocation>
        <location evidence="1">Plastid</location>
        <location evidence="1">Chloroplast inner membrane</location>
        <topology evidence="1">Multi-pass membrane protein</topology>
    </subcellularLocation>
</comment>
<comment type="similarity">
    <text evidence="1 2">Belongs to the CemA family.</text>
</comment>
<gene>
    <name evidence="1" type="primary">cemA</name>
    <name type="synonym">ycf10</name>
</gene>
<reference key="1">
    <citation type="journal article" date="1997" name="Proc. Natl. Acad. Sci. U.S.A.">
        <title>Complete nucleotide sequence of the chloroplast genome from the green alga Chlorella vulgaris: the existence of genes possibly involved in chloroplast division.</title>
        <authorList>
            <person name="Wakasugi T."/>
            <person name="Nagai T."/>
            <person name="Kapoor M."/>
            <person name="Sugita M."/>
            <person name="Ito M."/>
            <person name="Ito S."/>
            <person name="Tsudzuki J."/>
            <person name="Nakashima K."/>
            <person name="Tsudzuki T."/>
            <person name="Suzuki Y."/>
            <person name="Hamada A."/>
            <person name="Ohta T."/>
            <person name="Inamura A."/>
            <person name="Yoshinaga K."/>
            <person name="Sugiura M."/>
        </authorList>
    </citation>
    <scope>NUCLEOTIDE SEQUENCE [LARGE SCALE GENOMIC DNA]</scope>
    <source>
        <strain>IAM C-27 / Tamiya</strain>
    </source>
</reference>
<protein>
    <recommendedName>
        <fullName evidence="1">Potassium/proton antiporter CemA</fullName>
    </recommendedName>
    <alternativeName>
        <fullName evidence="1">Chloroplast envelope membrane protein A</fullName>
        <shortName evidence="1">CemA</shortName>
    </alternativeName>
</protein>
<organism>
    <name type="scientific">Chlorella vulgaris</name>
    <name type="common">Green alga</name>
    <dbReference type="NCBI Taxonomy" id="3077"/>
    <lineage>
        <taxon>Eukaryota</taxon>
        <taxon>Viridiplantae</taxon>
        <taxon>Chlorophyta</taxon>
        <taxon>core chlorophytes</taxon>
        <taxon>Trebouxiophyceae</taxon>
        <taxon>Chlorellales</taxon>
        <taxon>Chlorellaceae</taxon>
        <taxon>Chlorella clade</taxon>
        <taxon>Chlorella</taxon>
    </lineage>
</organism>
<keyword id="KW-0050">Antiport</keyword>
<keyword id="KW-0150">Chloroplast</keyword>
<keyword id="KW-0375">Hydrogen ion transport</keyword>
<keyword id="KW-0406">Ion transport</keyword>
<keyword id="KW-0472">Membrane</keyword>
<keyword id="KW-0934">Plastid</keyword>
<keyword id="KW-1001">Plastid inner membrane</keyword>
<keyword id="KW-0630">Potassium</keyword>
<keyword id="KW-0633">Potassium transport</keyword>
<keyword id="KW-0812">Transmembrane</keyword>
<keyword id="KW-1133">Transmembrane helix</keyword>
<keyword id="KW-0813">Transport</keyword>
<accession>P56349</accession>
<feature type="chain" id="PRO_0000216638" description="Potassium/proton antiporter CemA">
    <location>
        <begin position="1"/>
        <end position="266"/>
    </location>
</feature>
<feature type="transmembrane region" description="Helical" evidence="1">
    <location>
        <begin position="46"/>
        <end position="66"/>
    </location>
</feature>
<feature type="transmembrane region" description="Helical" evidence="1">
    <location>
        <begin position="151"/>
        <end position="171"/>
    </location>
</feature>
<feature type="transmembrane region" description="Helical" evidence="1">
    <location>
        <begin position="226"/>
        <end position="246"/>
    </location>
</feature>
<geneLocation type="chloroplast"/>
<evidence type="ECO:0000255" key="1">
    <source>
        <dbReference type="HAMAP-Rule" id="MF_01308"/>
    </source>
</evidence>
<evidence type="ECO:0000305" key="2"/>
<sequence length="266" mass="31121">MKKRTREQTGLIPRSILRTFERFRKQLLPGAEMLVIQEFRISRYQVIVSVRCLITLIFVPLFINILSKSFLIRPGIEYLWNQNHNEIFLNSYQENRALHDLHQFEEKVYFDSFVTDFAPSSNVLLQKQSVEIAKNYNLESIEAISNLFADFLSFLSLSVVFLLLKPQIIILKAFLSESLYSLSDTTKSFLLILGTDLLVGFHSPRGWEVFLEWLLRHFGLPENSDFMSLFVATFPVFLDTVFKYWIFRSLNKISPSTVATYHNIIE</sequence>